<name>AGP5_ARATH</name>
<feature type="signal peptide" evidence="3">
    <location>
        <begin position="1"/>
        <end position="21"/>
    </location>
</feature>
<feature type="chain" id="PRO_0000268993" description="Classical arabinogalactan protein 5">
    <location>
        <begin position="22"/>
        <end position="109"/>
    </location>
</feature>
<feature type="propeptide" id="PRO_0000268994" description="Removed in mature form" evidence="3">
    <location>
        <begin position="110"/>
        <end position="133"/>
    </location>
</feature>
<feature type="region of interest" description="Disordered" evidence="4">
    <location>
        <begin position="23"/>
        <end position="110"/>
    </location>
</feature>
<feature type="compositionally biased region" description="Pro residues" evidence="4">
    <location>
        <begin position="25"/>
        <end position="37"/>
    </location>
</feature>
<feature type="compositionally biased region" description="Low complexity" evidence="4">
    <location>
        <begin position="38"/>
        <end position="48"/>
    </location>
</feature>
<feature type="compositionally biased region" description="Pro residues" evidence="4">
    <location>
        <begin position="49"/>
        <end position="81"/>
    </location>
</feature>
<feature type="modified residue" description="Pyrrolidone carboxylic acid" evidence="2">
    <location>
        <position position="22"/>
    </location>
</feature>
<feature type="lipid moiety-binding region" description="GPI-anchor amidated asparagine" evidence="3">
    <location>
        <position position="109"/>
    </location>
</feature>
<feature type="sequence conflict" description="In Ref. 6; AAM63706." evidence="6" ref="6">
    <original>P</original>
    <variation>A</variation>
    <location>
        <position position="26"/>
    </location>
</feature>
<feature type="sequence conflict" description="In Ref. 6; AAM63706." evidence="6" ref="6">
    <original>Q</original>
    <variation>H</variation>
    <location>
        <position position="41"/>
    </location>
</feature>
<feature type="sequence conflict" description="In Ref. 6; AAM63706." evidence="6" ref="6">
    <original>S</original>
    <variation>A</variation>
    <location>
        <position position="85"/>
    </location>
</feature>
<gene>
    <name type="primary">AGP5</name>
    <name type="ordered locus">At1g35230</name>
    <name type="ORF">T9I1.2</name>
</gene>
<reference key="1">
    <citation type="journal article" date="1998" name="Trends Plant Sci.">
        <title>GPI-anchors on arabinogalactan-proteins: implications for signalling in plants.</title>
        <authorList>
            <person name="Schultz C.J."/>
            <person name="Gilson P.R."/>
            <person name="Oxley D."/>
            <person name="Youl J.J."/>
            <person name="Bacic A."/>
        </authorList>
    </citation>
    <scope>NUCLEOTIDE SEQUENCE [MRNA]</scope>
    <source>
        <strain>cv. Columbia</strain>
    </source>
</reference>
<reference key="2">
    <citation type="journal article" date="2000" name="Nature">
        <title>Sequence and analysis of chromosome 1 of the plant Arabidopsis thaliana.</title>
        <authorList>
            <person name="Theologis A."/>
            <person name="Ecker J.R."/>
            <person name="Palm C.J."/>
            <person name="Federspiel N.A."/>
            <person name="Kaul S."/>
            <person name="White O."/>
            <person name="Alonso J."/>
            <person name="Altafi H."/>
            <person name="Araujo R."/>
            <person name="Bowman C.L."/>
            <person name="Brooks S.Y."/>
            <person name="Buehler E."/>
            <person name="Chan A."/>
            <person name="Chao Q."/>
            <person name="Chen H."/>
            <person name="Cheuk R.F."/>
            <person name="Chin C.W."/>
            <person name="Chung M.K."/>
            <person name="Conn L."/>
            <person name="Conway A.B."/>
            <person name="Conway A.R."/>
            <person name="Creasy T.H."/>
            <person name="Dewar K."/>
            <person name="Dunn P."/>
            <person name="Etgu P."/>
            <person name="Feldblyum T.V."/>
            <person name="Feng J.-D."/>
            <person name="Fong B."/>
            <person name="Fujii C.Y."/>
            <person name="Gill J.E."/>
            <person name="Goldsmith A.D."/>
            <person name="Haas B."/>
            <person name="Hansen N.F."/>
            <person name="Hughes B."/>
            <person name="Huizar L."/>
            <person name="Hunter J.L."/>
            <person name="Jenkins J."/>
            <person name="Johnson-Hopson C."/>
            <person name="Khan S."/>
            <person name="Khaykin E."/>
            <person name="Kim C.J."/>
            <person name="Koo H.L."/>
            <person name="Kremenetskaia I."/>
            <person name="Kurtz D.B."/>
            <person name="Kwan A."/>
            <person name="Lam B."/>
            <person name="Langin-Hooper S."/>
            <person name="Lee A."/>
            <person name="Lee J.M."/>
            <person name="Lenz C.A."/>
            <person name="Li J.H."/>
            <person name="Li Y.-P."/>
            <person name="Lin X."/>
            <person name="Liu S.X."/>
            <person name="Liu Z.A."/>
            <person name="Luros J.S."/>
            <person name="Maiti R."/>
            <person name="Marziali A."/>
            <person name="Militscher J."/>
            <person name="Miranda M."/>
            <person name="Nguyen M."/>
            <person name="Nierman W.C."/>
            <person name="Osborne B.I."/>
            <person name="Pai G."/>
            <person name="Peterson J."/>
            <person name="Pham P.K."/>
            <person name="Rizzo M."/>
            <person name="Rooney T."/>
            <person name="Rowley D."/>
            <person name="Sakano H."/>
            <person name="Salzberg S.L."/>
            <person name="Schwartz J.R."/>
            <person name="Shinn P."/>
            <person name="Southwick A.M."/>
            <person name="Sun H."/>
            <person name="Tallon L.J."/>
            <person name="Tambunga G."/>
            <person name="Toriumi M.J."/>
            <person name="Town C.D."/>
            <person name="Utterback T."/>
            <person name="Van Aken S."/>
            <person name="Vaysberg M."/>
            <person name="Vysotskaia V.S."/>
            <person name="Walker M."/>
            <person name="Wu D."/>
            <person name="Yu G."/>
            <person name="Fraser C.M."/>
            <person name="Venter J.C."/>
            <person name="Davis R.W."/>
        </authorList>
    </citation>
    <scope>NUCLEOTIDE SEQUENCE [LARGE SCALE GENOMIC DNA]</scope>
    <source>
        <strain>cv. Columbia</strain>
    </source>
</reference>
<reference key="3">
    <citation type="journal article" date="2017" name="Plant J.">
        <title>Araport11: a complete reannotation of the Arabidopsis thaliana reference genome.</title>
        <authorList>
            <person name="Cheng C.Y."/>
            <person name="Krishnakumar V."/>
            <person name="Chan A.P."/>
            <person name="Thibaud-Nissen F."/>
            <person name="Schobel S."/>
            <person name="Town C.D."/>
        </authorList>
    </citation>
    <scope>GENOME REANNOTATION</scope>
    <source>
        <strain>cv. Columbia</strain>
    </source>
</reference>
<reference key="4">
    <citation type="journal article" date="2002" name="Science">
        <title>Functional annotation of a full-length Arabidopsis cDNA collection.</title>
        <authorList>
            <person name="Seki M."/>
            <person name="Narusaka M."/>
            <person name="Kamiya A."/>
            <person name="Ishida J."/>
            <person name="Satou M."/>
            <person name="Sakurai T."/>
            <person name="Nakajima M."/>
            <person name="Enju A."/>
            <person name="Akiyama K."/>
            <person name="Oono Y."/>
            <person name="Muramatsu M."/>
            <person name="Hayashizaki Y."/>
            <person name="Kawai J."/>
            <person name="Carninci P."/>
            <person name="Itoh M."/>
            <person name="Ishii Y."/>
            <person name="Arakawa T."/>
            <person name="Shibata K."/>
            <person name="Shinagawa A."/>
            <person name="Shinozaki K."/>
        </authorList>
    </citation>
    <scope>NUCLEOTIDE SEQUENCE [LARGE SCALE MRNA]</scope>
    <source>
        <strain>cv. Columbia</strain>
    </source>
</reference>
<reference key="5">
    <citation type="journal article" date="2003" name="Science">
        <title>Empirical analysis of transcriptional activity in the Arabidopsis genome.</title>
        <authorList>
            <person name="Yamada K."/>
            <person name="Lim J."/>
            <person name="Dale J.M."/>
            <person name="Chen H."/>
            <person name="Shinn P."/>
            <person name="Palm C.J."/>
            <person name="Southwick A.M."/>
            <person name="Wu H.C."/>
            <person name="Kim C.J."/>
            <person name="Nguyen M."/>
            <person name="Pham P.K."/>
            <person name="Cheuk R.F."/>
            <person name="Karlin-Newmann G."/>
            <person name="Liu S.X."/>
            <person name="Lam B."/>
            <person name="Sakano H."/>
            <person name="Wu T."/>
            <person name="Yu G."/>
            <person name="Miranda M."/>
            <person name="Quach H.L."/>
            <person name="Tripp M."/>
            <person name="Chang C.H."/>
            <person name="Lee J.M."/>
            <person name="Toriumi M.J."/>
            <person name="Chan M.M."/>
            <person name="Tang C.C."/>
            <person name="Onodera C.S."/>
            <person name="Deng J.M."/>
            <person name="Akiyama K."/>
            <person name="Ansari Y."/>
            <person name="Arakawa T."/>
            <person name="Banh J."/>
            <person name="Banno F."/>
            <person name="Bowser L."/>
            <person name="Brooks S.Y."/>
            <person name="Carninci P."/>
            <person name="Chao Q."/>
            <person name="Choy N."/>
            <person name="Enju A."/>
            <person name="Goldsmith A.D."/>
            <person name="Gurjal M."/>
            <person name="Hansen N.F."/>
            <person name="Hayashizaki Y."/>
            <person name="Johnson-Hopson C."/>
            <person name="Hsuan V.W."/>
            <person name="Iida K."/>
            <person name="Karnes M."/>
            <person name="Khan S."/>
            <person name="Koesema E."/>
            <person name="Ishida J."/>
            <person name="Jiang P.X."/>
            <person name="Jones T."/>
            <person name="Kawai J."/>
            <person name="Kamiya A."/>
            <person name="Meyers C."/>
            <person name="Nakajima M."/>
            <person name="Narusaka M."/>
            <person name="Seki M."/>
            <person name="Sakurai T."/>
            <person name="Satou M."/>
            <person name="Tamse R."/>
            <person name="Vaysberg M."/>
            <person name="Wallender E.K."/>
            <person name="Wong C."/>
            <person name="Yamamura Y."/>
            <person name="Yuan S."/>
            <person name="Shinozaki K."/>
            <person name="Davis R.W."/>
            <person name="Theologis A."/>
            <person name="Ecker J.R."/>
        </authorList>
    </citation>
    <scope>NUCLEOTIDE SEQUENCE [LARGE SCALE MRNA]</scope>
    <source>
        <strain>cv. Columbia</strain>
    </source>
</reference>
<reference key="6">
    <citation type="submission" date="2002-03" db="EMBL/GenBank/DDBJ databases">
        <title>Full-length cDNA from Arabidopsis thaliana.</title>
        <authorList>
            <person name="Brover V.V."/>
            <person name="Troukhan M.E."/>
            <person name="Alexandrov N.A."/>
            <person name="Lu Y.-P."/>
            <person name="Flavell R.B."/>
            <person name="Feldmann K.A."/>
        </authorList>
    </citation>
    <scope>NUCLEOTIDE SEQUENCE [LARGE SCALE MRNA]</scope>
</reference>
<reference key="7">
    <citation type="journal article" date="2000" name="Plant Cell">
        <title>The classical arabinogalactan protein gene family of Arabidopsis.</title>
        <authorList>
            <person name="Schultz C.J."/>
            <person name="Johnson K.L."/>
            <person name="Currie G."/>
            <person name="Bacic A."/>
        </authorList>
    </citation>
    <scope>TISSUE SPECIFICITY</scope>
</reference>
<reference key="8">
    <citation type="journal article" date="2002" name="Plant Physiol.">
        <title>Using genomic resources to guide research directions. The arabinogalactan protein gene family as a test case.</title>
        <authorList>
            <person name="Schultz C.J."/>
            <person name="Rumsewicz M.P."/>
            <person name="Johnson K.L."/>
            <person name="Jones B.J."/>
            <person name="Gaspar Y.M."/>
            <person name="Bacic A."/>
        </authorList>
    </citation>
    <scope>GENE FAMILY</scope>
    <scope>NOMENCLATURE</scope>
</reference>
<sequence length="133" mass="12597">MASKSVVVFLFLALVASSVVAQAPGPAPTISPLPATPTPSQSPRATAPAPSPSANPPPSAPTTAPPVSQPPTESPPAPPTSTSPSGAPGTNVPSGEAGPAQSPLSGSPNAAAVSRVSLVGTFAGVAVIAALLL</sequence>
<dbReference type="EMBL" id="AF082302">
    <property type="protein sequence ID" value="AAC77827.1"/>
    <property type="molecule type" value="mRNA"/>
</dbReference>
<dbReference type="EMBL" id="AC069160">
    <property type="protein sequence ID" value="AAG51456.1"/>
    <property type="molecule type" value="Genomic_DNA"/>
</dbReference>
<dbReference type="EMBL" id="CP002684">
    <property type="protein sequence ID" value="AEE31770.1"/>
    <property type="molecule type" value="Genomic_DNA"/>
</dbReference>
<dbReference type="EMBL" id="AK117995">
    <property type="protein sequence ID" value="BAC42630.1"/>
    <property type="molecule type" value="mRNA"/>
</dbReference>
<dbReference type="EMBL" id="BT004723">
    <property type="protein sequence ID" value="AAO42969.1"/>
    <property type="molecule type" value="mRNA"/>
</dbReference>
<dbReference type="EMBL" id="AY086648">
    <property type="protein sequence ID" value="AAM63706.1"/>
    <property type="molecule type" value="mRNA"/>
</dbReference>
<dbReference type="PIR" id="C86473">
    <property type="entry name" value="C86473"/>
</dbReference>
<dbReference type="RefSeq" id="NP_564455.1">
    <property type="nucleotide sequence ID" value="NM_103221.3"/>
</dbReference>
<dbReference type="BioGRID" id="25644">
    <property type="interactions" value="1"/>
</dbReference>
<dbReference type="IntAct" id="Q8LCE4">
    <property type="interactions" value="1"/>
</dbReference>
<dbReference type="STRING" id="3702.Q8LCE4"/>
<dbReference type="GlyGen" id="Q8LCE4">
    <property type="glycosylation" value="2 sites"/>
</dbReference>
<dbReference type="PaxDb" id="3702-AT1G35230.1"/>
<dbReference type="EnsemblPlants" id="AT1G35230.1">
    <property type="protein sequence ID" value="AT1G35230.1"/>
    <property type="gene ID" value="AT1G35230"/>
</dbReference>
<dbReference type="GeneID" id="840412"/>
<dbReference type="Gramene" id="AT1G35230.1">
    <property type="protein sequence ID" value="AT1G35230.1"/>
    <property type="gene ID" value="AT1G35230"/>
</dbReference>
<dbReference type="KEGG" id="ath:AT1G35230"/>
<dbReference type="Araport" id="AT1G35230"/>
<dbReference type="TAIR" id="AT1G35230">
    <property type="gene designation" value="AGP5"/>
</dbReference>
<dbReference type="eggNOG" id="ENOG502R7KN">
    <property type="taxonomic scope" value="Eukaryota"/>
</dbReference>
<dbReference type="HOGENOM" id="CLU_1909540_0_0_1"/>
<dbReference type="InParanoid" id="Q8LCE4"/>
<dbReference type="OMA" id="FALRITM"/>
<dbReference type="PRO" id="PR:Q8LCE4"/>
<dbReference type="Proteomes" id="UP000006548">
    <property type="component" value="Chromosome 1"/>
</dbReference>
<dbReference type="ExpressionAtlas" id="Q8LCE4">
    <property type="expression patterns" value="baseline and differential"/>
</dbReference>
<dbReference type="GO" id="GO:0005886">
    <property type="term" value="C:plasma membrane"/>
    <property type="evidence" value="ECO:0007669"/>
    <property type="project" value="UniProtKB-SubCell"/>
</dbReference>
<dbReference type="GO" id="GO:0098552">
    <property type="term" value="C:side of membrane"/>
    <property type="evidence" value="ECO:0007669"/>
    <property type="project" value="UniProtKB-KW"/>
</dbReference>
<dbReference type="InterPro" id="IPR044959">
    <property type="entry name" value="AGP"/>
</dbReference>
<dbReference type="PANTHER" id="PTHR36321:SF24">
    <property type="entry name" value="CLASSICAL ARABINOGALACTAN PROTEIN 10-RELATED"/>
    <property type="match status" value="1"/>
</dbReference>
<dbReference type="PANTHER" id="PTHR36321">
    <property type="entry name" value="CLASSICAL ARABINOGALACTAN PROTEIN 9"/>
    <property type="match status" value="1"/>
</dbReference>
<comment type="function">
    <text>Proteoglycan that seems to be implicated in diverse developmental roles such as differentiation, cell-cell recognition, embryogenesis and programmed cell death.</text>
</comment>
<comment type="subcellular location">
    <subcellularLocation>
        <location evidence="6">Cell membrane</location>
        <topology evidence="6">Lipid-anchor</topology>
        <topology evidence="6">GPI-anchor</topology>
    </subcellularLocation>
</comment>
<comment type="tissue specificity">
    <text evidence="5">Expressed at a low level in flowers and siliques.</text>
</comment>
<comment type="PTM">
    <text evidence="1">O-glycosylated on the hydroxyproline residues.</text>
</comment>
<comment type="similarity">
    <text evidence="6">Belongs to the classical AGP family.</text>
</comment>
<protein>
    <recommendedName>
        <fullName>Classical arabinogalactan protein 5</fullName>
    </recommendedName>
</protein>
<evidence type="ECO:0000250" key="1"/>
<evidence type="ECO:0000250" key="2">
    <source>
        <dbReference type="UniProtKB" id="Q9M0S4"/>
    </source>
</evidence>
<evidence type="ECO:0000255" key="3"/>
<evidence type="ECO:0000256" key="4">
    <source>
        <dbReference type="SAM" id="MobiDB-lite"/>
    </source>
</evidence>
<evidence type="ECO:0000269" key="5">
    <source>
    </source>
</evidence>
<evidence type="ECO:0000305" key="6"/>
<organism>
    <name type="scientific">Arabidopsis thaliana</name>
    <name type="common">Mouse-ear cress</name>
    <dbReference type="NCBI Taxonomy" id="3702"/>
    <lineage>
        <taxon>Eukaryota</taxon>
        <taxon>Viridiplantae</taxon>
        <taxon>Streptophyta</taxon>
        <taxon>Embryophyta</taxon>
        <taxon>Tracheophyta</taxon>
        <taxon>Spermatophyta</taxon>
        <taxon>Magnoliopsida</taxon>
        <taxon>eudicotyledons</taxon>
        <taxon>Gunneridae</taxon>
        <taxon>Pentapetalae</taxon>
        <taxon>rosids</taxon>
        <taxon>malvids</taxon>
        <taxon>Brassicales</taxon>
        <taxon>Brassicaceae</taxon>
        <taxon>Camelineae</taxon>
        <taxon>Arabidopsis</taxon>
    </lineage>
</organism>
<keyword id="KW-1003">Cell membrane</keyword>
<keyword id="KW-0325">Glycoprotein</keyword>
<keyword id="KW-0336">GPI-anchor</keyword>
<keyword id="KW-0449">Lipoprotein</keyword>
<keyword id="KW-0472">Membrane</keyword>
<keyword id="KW-0654">Proteoglycan</keyword>
<keyword id="KW-0873">Pyrrolidone carboxylic acid</keyword>
<keyword id="KW-1185">Reference proteome</keyword>
<keyword id="KW-0732">Signal</keyword>
<proteinExistence type="evidence at transcript level"/>
<accession>Q8LCE4</accession>
<accession>Q9ZT15</accession>